<comment type="function">
    <text evidence="1 3">Catalyzes alpha(1-&gt;3) linkage of fucosyl moiety transferred from GDP-beta-L-fucose to N-acetyl glucosamine (GlcNAc) within type 2 lactosamine (LacNAc, beta-D-Gal-(1-&gt;4)-beta-D-GlcNAc-) glycan attached to glycolipids and N- or O-linked glycoproteins. Fucosylates distal type 2 LacNAc and its fucosylated (H-type 2 LacNAc) and sialylated (sialyl-type 2 LacNAc) derivatives to form Lewis x (Lex) (CD15) and Lewis y (Ley) antigenic epitopes involved in cell adhesion and differentiation (By similarity). Generates Lex epitopes in the brain, presumably playing a role in the maintenance of neuronal stemness and neurite outgrowth in progenitor neural cells (By similarity). Fucosylates the internal type 2 LacNAc unit of the polylactosamine chain to form VIM-2 antigen that serves as recognition epitope for SELE (By similarity). Can also modify milk oligosaccharides in particular type 2 tetrasaccharide LNnT (By similarity).</text>
</comment>
<comment type="catalytic activity">
    <reaction evidence="3">
        <text>a beta-D-galactosyl-(1-&gt;4)-N-acetyl-beta-D-glucosaminyl derivative + GDP-beta-L-fucose = a beta-D-galactosyl-(1-&gt;4)-[alpha-L-fucosyl-(1-&gt;3)]-N-acetyl-beta-D-glucosaminyl derivative + GDP + H(+)</text>
        <dbReference type="Rhea" id="RHEA:14257"/>
        <dbReference type="ChEBI" id="CHEBI:15378"/>
        <dbReference type="ChEBI" id="CHEBI:57273"/>
        <dbReference type="ChEBI" id="CHEBI:58189"/>
        <dbReference type="ChEBI" id="CHEBI:133507"/>
        <dbReference type="ChEBI" id="CHEBI:137941"/>
        <dbReference type="EC" id="2.4.1.152"/>
    </reaction>
    <physiologicalReaction direction="left-to-right" evidence="3">
        <dbReference type="Rhea" id="RHEA:14258"/>
    </physiologicalReaction>
</comment>
<comment type="catalytic activity">
    <reaction evidence="3">
        <text>an alpha-Neu5Ac-(2-&gt;3)-beta-D-Gal-(1-&gt;4)-beta-D-GlcNAc-(1-&gt;3)-beta-D-Gal-(1-&gt;4)-beta-D-GlcNAc derivative + GDP-beta-L-fucose = an alpha-Neu5Ac-(2-&gt;3)-beta-D-Gal-(1-&gt;4)-beta-D-GlcNAc-(1-&gt;3)-beta-D-Gal-(1-&gt;4)-[alpha-L-Fuc-(1-&gt;3)]-beta-D-GlcNAc derivative + GDP + H(+)</text>
        <dbReference type="Rhea" id="RHEA:68044"/>
        <dbReference type="ChEBI" id="CHEBI:15378"/>
        <dbReference type="ChEBI" id="CHEBI:57273"/>
        <dbReference type="ChEBI" id="CHEBI:58189"/>
        <dbReference type="ChEBI" id="CHEBI:145343"/>
        <dbReference type="ChEBI" id="CHEBI:176900"/>
    </reaction>
    <physiologicalReaction direction="left-to-right" evidence="3">
        <dbReference type="Rhea" id="RHEA:68045"/>
    </physiologicalReaction>
</comment>
<comment type="catalytic activity">
    <reaction evidence="1">
        <text>alpha-N-glycoloylneuraminosyl-(2-&gt;3)-beta-D-galactosyl-(1-&gt;4)-N-acetyl-beta-D-glucosaminyl-(1-&gt;3)-beta-D-galactosyl-(1-&gt;4)-N-acetyl-beta-D-glucosaminyl-(1-&gt;3)-beta-D-galactosyl-(1-&gt;4)-beta-D-glucosyl-(1&lt;-&gt;1')-ceramide + GDP-beta-L-fucose = alpha-N-glycoloylneuraminosyl-(2-&gt;3)-beta-D-galactosyl-(1-&gt;4)-N-acetyl-beta-D-glucosaminyl-(1-&gt;3)-beta-D-galactosyl-(1-&gt;4)-[alpha-L-fucosyl-(1-&gt;3)]-N-acetyl-beta-D-glucosaminyl-(1-&gt;3)-beta-D-galactosyl-(1-&gt;4)-beta-D-glucosyl-(1&lt;-&gt;1')-ceramide + GDP + H(+)</text>
        <dbReference type="Rhea" id="RHEA:48388"/>
        <dbReference type="ChEBI" id="CHEBI:15378"/>
        <dbReference type="ChEBI" id="CHEBI:57273"/>
        <dbReference type="ChEBI" id="CHEBI:58189"/>
        <dbReference type="ChEBI" id="CHEBI:90383"/>
        <dbReference type="ChEBI" id="CHEBI:90384"/>
    </reaction>
    <physiologicalReaction direction="left-to-right" evidence="1">
        <dbReference type="Rhea" id="RHEA:48389"/>
    </physiologicalReaction>
</comment>
<comment type="catalytic activity">
    <reaction evidence="1">
        <text>alpha-D-galactosyl-(1-&gt;3)-beta-D-galactosyl-(1-&gt;4)-N-acetyl-beta-D-glucosaminyl-(1-&gt;3)-beta-D-galactosyl-(1-&gt;4)-beta-D-glucosyl-(1&lt;-&gt;1')-ceramide + GDP-beta-L-fucose = a neolactoside IV(3)-alpha-Gal,III(3)-alpha-Fuc-nLc4Cer + GDP + H(+)</text>
        <dbReference type="Rhea" id="RHEA:48380"/>
        <dbReference type="ChEBI" id="CHEBI:15378"/>
        <dbReference type="ChEBI" id="CHEBI:57273"/>
        <dbReference type="ChEBI" id="CHEBI:58189"/>
        <dbReference type="ChEBI" id="CHEBI:90380"/>
        <dbReference type="ChEBI" id="CHEBI:90381"/>
    </reaction>
    <physiologicalReaction direction="left-to-right" evidence="1">
        <dbReference type="Rhea" id="RHEA:48381"/>
    </physiologicalReaction>
</comment>
<comment type="catalytic activity">
    <reaction evidence="1">
        <text>a neolactoside nLc4Cer + GDP-beta-L-fucose = a neolactoside III(3)-alpha-Fuc-nLc4Cer + GDP + H(+)</text>
        <dbReference type="Rhea" id="RHEA:48376"/>
        <dbReference type="ChEBI" id="CHEBI:15378"/>
        <dbReference type="ChEBI" id="CHEBI:57273"/>
        <dbReference type="ChEBI" id="CHEBI:58189"/>
        <dbReference type="ChEBI" id="CHEBI:90376"/>
        <dbReference type="ChEBI" id="CHEBI:90379"/>
    </reaction>
    <physiologicalReaction direction="left-to-right" evidence="1">
        <dbReference type="Rhea" id="RHEA:48377"/>
    </physiologicalReaction>
</comment>
<comment type="catalytic activity">
    <reaction evidence="3">
        <text>an N-acetyl-alpha-neuraminyl-(2-&gt;3)-beta-D-galactosyl-(1-&gt;4)-N-acetyl-beta-D-glucosaminyl derivative + GDP-beta-L-fucose = an alpha-Neu5Ac-(2-&gt;3)-beta-D-Gal-(1-&gt;4)-[alpha-L-Fuc-(1-&gt;3)]-beta-D-GlcNAc derivative + GDP + H(+)</text>
        <dbReference type="Rhea" id="RHEA:56076"/>
        <dbReference type="ChEBI" id="CHEBI:15378"/>
        <dbReference type="ChEBI" id="CHEBI:57273"/>
        <dbReference type="ChEBI" id="CHEBI:58189"/>
        <dbReference type="ChEBI" id="CHEBI:136545"/>
        <dbReference type="ChEBI" id="CHEBI:139509"/>
    </reaction>
    <physiologicalReaction direction="left-to-right" evidence="3">
        <dbReference type="Rhea" id="RHEA:56077"/>
    </physiologicalReaction>
</comment>
<comment type="catalytic activity">
    <reaction evidence="3">
        <text>beta-D-Gal-(1-&gt;4)-beta-D-GlcNAc-(1-&gt;3)-beta-D-Gal-(1-&gt;4)-D-Glc + GDP-beta-L-fucose = beta-D-Gal-(1-&gt;4)-[alpha-L-Fuc-(1-&gt;3)]-beta-D-GlcNAc-(1-&gt;3)-beta-D-Gal-(1-&gt;4)-D-Glc + GDP + H(+)</text>
        <dbReference type="Rhea" id="RHEA:77187"/>
        <dbReference type="ChEBI" id="CHEBI:15378"/>
        <dbReference type="ChEBI" id="CHEBI:57273"/>
        <dbReference type="ChEBI" id="CHEBI:58189"/>
        <dbReference type="ChEBI" id="CHEBI:60239"/>
        <dbReference type="ChEBI" id="CHEBI:61352"/>
    </reaction>
    <physiologicalReaction direction="left-to-right" evidence="3">
        <dbReference type="Rhea" id="RHEA:77188"/>
    </physiologicalReaction>
</comment>
<comment type="catalytic activity">
    <reaction evidence="3">
        <text>an alpha-L-Fuc-(1-&gt;2)-beta-D-Gal-(1-&gt;4)-beta-D-GlcNAc derivative + GDP-beta-L-fucose = an alpha-L-Fuc-(1-&gt;2)-beta-D-Gal-(1-&gt;4)-[alpha-L-Fuc-(1-&gt;3)]-beta-D-GlcNAc derivative + GDP + H(+)</text>
        <dbReference type="Rhea" id="RHEA:77191"/>
        <dbReference type="ChEBI" id="CHEBI:15378"/>
        <dbReference type="ChEBI" id="CHEBI:57273"/>
        <dbReference type="ChEBI" id="CHEBI:58189"/>
        <dbReference type="ChEBI" id="CHEBI:133510"/>
        <dbReference type="ChEBI" id="CHEBI:195560"/>
    </reaction>
    <physiologicalReaction direction="left-to-right" evidence="3">
        <dbReference type="Rhea" id="RHEA:77192"/>
    </physiologicalReaction>
</comment>
<comment type="activity regulation">
    <text evidence="3">Activated by Mn2+.</text>
</comment>
<comment type="pathway">
    <text evidence="1 3">Protein modification; protein glycosylation.</text>
</comment>
<comment type="pathway">
    <text evidence="1">Glycolipid biosynthesis.</text>
</comment>
<comment type="subunit">
    <text evidence="3">Homodimer.</text>
</comment>
<comment type="subcellular location">
    <subcellularLocation>
        <location evidence="3">Golgi apparatus</location>
        <location evidence="3">trans-Golgi network membrane</location>
        <topology evidence="2">Single-pass type II membrane protein</topology>
    </subcellularLocation>
    <subcellularLocation>
        <location evidence="1">Golgi apparatus membrane</location>
    </subcellularLocation>
</comment>
<comment type="domain">
    <text evidence="3">The donor-binding domain adopts a Rossman-like fold involved in GDP-beta-L-fucose sugar donor interactions.</text>
</comment>
<comment type="domain">
    <text evidence="3">The acceptor-binding domain adopts a Rossman-like fold consisting of six-stranded parallel beta sheets characteristic of the Toll/interleukin-1 receptor (TIR) fold family. Interacts with the LacNAc unit of type 2 LacNAc and H-type 2 LacNAc structures. It contains the catalytic base Glu-137 which deprotonates the hydroxyl group of GlcNAc while forming bridging interactions with the donor sugar to position the catalytic machinery in the active site.</text>
</comment>
<comment type="PTM">
    <text evidence="3">N-glycosylated with complex-type N-glycans.</text>
</comment>
<comment type="similarity">
    <text evidence="6">Belongs to the glycosyltransferase 10 family.</text>
</comment>
<organism>
    <name type="scientific">Pan troglodytes</name>
    <name type="common">Chimpanzee</name>
    <dbReference type="NCBI Taxonomy" id="9598"/>
    <lineage>
        <taxon>Eukaryota</taxon>
        <taxon>Metazoa</taxon>
        <taxon>Chordata</taxon>
        <taxon>Craniata</taxon>
        <taxon>Vertebrata</taxon>
        <taxon>Euteleostomi</taxon>
        <taxon>Mammalia</taxon>
        <taxon>Eutheria</taxon>
        <taxon>Euarchontoglires</taxon>
        <taxon>Primates</taxon>
        <taxon>Haplorrhini</taxon>
        <taxon>Catarrhini</taxon>
        <taxon>Hominidae</taxon>
        <taxon>Pan</taxon>
    </lineage>
</organism>
<evidence type="ECO:0000250" key="1">
    <source>
        <dbReference type="UniProtKB" id="O88819"/>
    </source>
</evidence>
<evidence type="ECO:0000250" key="2">
    <source>
        <dbReference type="UniProtKB" id="Q6P4F1"/>
    </source>
</evidence>
<evidence type="ECO:0000250" key="3">
    <source>
        <dbReference type="UniProtKB" id="Q9Y231"/>
    </source>
</evidence>
<evidence type="ECO:0000255" key="4"/>
<evidence type="ECO:0000303" key="5">
    <source ref="1"/>
</evidence>
<evidence type="ECO:0000305" key="6"/>
<gene>
    <name evidence="3" type="primary">FUT9</name>
</gene>
<reference key="1">
    <citation type="submission" date="2004-09" db="EMBL/GenBank/DDBJ databases">
        <title>Phylogeny of fucosyltransferases.</title>
        <authorList>
            <person name="Martinez-Duncker I."/>
            <person name="Oriol R."/>
            <person name="Mollicone R."/>
        </authorList>
    </citation>
    <scope>NUCLEOTIDE SEQUENCE [MRNA]</scope>
</reference>
<keyword id="KW-1015">Disulfide bond</keyword>
<keyword id="KW-0325">Glycoprotein</keyword>
<keyword id="KW-0328">Glycosyltransferase</keyword>
<keyword id="KW-0333">Golgi apparatus</keyword>
<keyword id="KW-0443">Lipid metabolism</keyword>
<keyword id="KW-0472">Membrane</keyword>
<keyword id="KW-1185">Reference proteome</keyword>
<keyword id="KW-0735">Signal-anchor</keyword>
<keyword id="KW-0808">Transferase</keyword>
<keyword id="KW-0812">Transmembrane</keyword>
<keyword id="KW-1133">Transmembrane helix</keyword>
<protein>
    <recommendedName>
        <fullName evidence="3">4-galactosyl-N-acetylglucosaminide 3-alpha-L-fucosyltransferase 9</fullName>
        <ecNumber evidence="3">2.4.1.152</ecNumber>
    </recommendedName>
    <alternativeName>
        <fullName evidence="5">Fucosyltransferase 9</fullName>
    </alternativeName>
    <alternativeName>
        <fullName evidence="3">Fucosyltransferase IX</fullName>
        <shortName evidence="3">Fuc-TIX</shortName>
        <shortName>FucT-IX</shortName>
    </alternativeName>
    <alternativeName>
        <fullName>Galactoside 3-L-fucosyltransferase</fullName>
    </alternativeName>
</protein>
<name>FUT9_PANTR</name>
<dbReference type="EC" id="2.4.1.152" evidence="3"/>
<dbReference type="EMBL" id="AJ831839">
    <property type="protein sequence ID" value="CAH41982.1"/>
    <property type="molecule type" value="mRNA"/>
</dbReference>
<dbReference type="RefSeq" id="NP_001008978.1">
    <property type="nucleotide sequence ID" value="NM_001008978.1"/>
</dbReference>
<dbReference type="RefSeq" id="XP_009449941.1">
    <property type="nucleotide sequence ID" value="XM_009451666.4"/>
</dbReference>
<dbReference type="RefSeq" id="XP_016810097.1">
    <property type="nucleotide sequence ID" value="XM_016954608.4"/>
</dbReference>
<dbReference type="SMR" id="Q659L0"/>
<dbReference type="FunCoup" id="Q659L0">
    <property type="interactions" value="590"/>
</dbReference>
<dbReference type="STRING" id="9598.ENSPTRP00000087521"/>
<dbReference type="CAZy" id="GT10">
    <property type="family name" value="Glycosyltransferase Family 10"/>
</dbReference>
<dbReference type="GlyCosmos" id="Q659L0">
    <property type="glycosylation" value="3 sites, No reported glycans"/>
</dbReference>
<dbReference type="PaxDb" id="9598-ENSPTRP00000031484"/>
<dbReference type="Ensembl" id="ENSPTRT00000081774.1">
    <property type="protein sequence ID" value="ENSPTRP00000087521.1"/>
    <property type="gene ID" value="ENSPTRG00000052137.1"/>
</dbReference>
<dbReference type="GeneID" id="449500"/>
<dbReference type="KEGG" id="ptr:449500"/>
<dbReference type="CTD" id="10690"/>
<dbReference type="VGNC" id="VGNC:9962">
    <property type="gene designation" value="FUT9"/>
</dbReference>
<dbReference type="eggNOG" id="KOG2619">
    <property type="taxonomic scope" value="Eukaryota"/>
</dbReference>
<dbReference type="GeneTree" id="ENSGT00940000155095"/>
<dbReference type="HOGENOM" id="CLU_032075_4_2_1"/>
<dbReference type="InParanoid" id="Q659L0"/>
<dbReference type="OMA" id="FRKWDSQ"/>
<dbReference type="OrthoDB" id="340at9604"/>
<dbReference type="TreeFam" id="TF316348"/>
<dbReference type="UniPathway" id="UPA00378"/>
<dbReference type="Proteomes" id="UP000002277">
    <property type="component" value="Chromosome 6"/>
</dbReference>
<dbReference type="Bgee" id="ENSPTRG00000052137">
    <property type="expression patterns" value="Expressed in temporal lobe and 9 other cell types or tissues"/>
</dbReference>
<dbReference type="GO" id="GO:0005794">
    <property type="term" value="C:Golgi apparatus"/>
    <property type="evidence" value="ECO:0000250"/>
    <property type="project" value="UniProtKB"/>
</dbReference>
<dbReference type="GO" id="GO:0000139">
    <property type="term" value="C:Golgi membrane"/>
    <property type="evidence" value="ECO:0007669"/>
    <property type="project" value="UniProtKB-SubCell"/>
</dbReference>
<dbReference type="GO" id="GO:0005802">
    <property type="term" value="C:trans-Golgi network"/>
    <property type="evidence" value="ECO:0000250"/>
    <property type="project" value="UniProtKB"/>
</dbReference>
<dbReference type="GO" id="GO:0032588">
    <property type="term" value="C:trans-Golgi network membrane"/>
    <property type="evidence" value="ECO:0000250"/>
    <property type="project" value="UniProtKB"/>
</dbReference>
<dbReference type="GO" id="GO:0017083">
    <property type="term" value="F:4-galactosyl-N-acetylglucosaminide 3-alpha-L-fucosyltransferase activity"/>
    <property type="evidence" value="ECO:0000250"/>
    <property type="project" value="UniProtKB"/>
</dbReference>
<dbReference type="GO" id="GO:0046920">
    <property type="term" value="F:alpha-(1-&gt;3)-fucosyltransferase activity"/>
    <property type="evidence" value="ECO:0000318"/>
    <property type="project" value="GO_Central"/>
</dbReference>
<dbReference type="GO" id="GO:0042803">
    <property type="term" value="F:protein homodimerization activity"/>
    <property type="evidence" value="ECO:0000250"/>
    <property type="project" value="UniProtKB"/>
</dbReference>
<dbReference type="GO" id="GO:0036065">
    <property type="term" value="P:fucosylation"/>
    <property type="evidence" value="ECO:0000250"/>
    <property type="project" value="UniProtKB"/>
</dbReference>
<dbReference type="GO" id="GO:0006688">
    <property type="term" value="P:glycosphingolipid biosynthetic process"/>
    <property type="evidence" value="ECO:0000250"/>
    <property type="project" value="UniProtKB"/>
</dbReference>
<dbReference type="GO" id="GO:0106402">
    <property type="term" value="P:Lewis x epitope biosynthetic process"/>
    <property type="evidence" value="ECO:0000250"/>
    <property type="project" value="UniProtKB"/>
</dbReference>
<dbReference type="GO" id="GO:0036071">
    <property type="term" value="P:N-glycan fucosylation"/>
    <property type="evidence" value="ECO:0007669"/>
    <property type="project" value="Ensembl"/>
</dbReference>
<dbReference type="GO" id="GO:0030182">
    <property type="term" value="P:neuron differentiation"/>
    <property type="evidence" value="ECO:0000250"/>
    <property type="project" value="UniProtKB"/>
</dbReference>
<dbReference type="GO" id="GO:0036445">
    <property type="term" value="P:neuronal stem cell division"/>
    <property type="evidence" value="ECO:0000250"/>
    <property type="project" value="UniProtKB"/>
</dbReference>
<dbReference type="GO" id="GO:0009312">
    <property type="term" value="P:oligosaccharide biosynthetic process"/>
    <property type="evidence" value="ECO:0007669"/>
    <property type="project" value="Ensembl"/>
</dbReference>
<dbReference type="GO" id="GO:0000271">
    <property type="term" value="P:polysaccharide biosynthetic process"/>
    <property type="evidence" value="ECO:0000250"/>
    <property type="project" value="UniProtKB"/>
</dbReference>
<dbReference type="GO" id="GO:0010976">
    <property type="term" value="P:positive regulation of neuron projection development"/>
    <property type="evidence" value="ECO:0000250"/>
    <property type="project" value="UniProtKB"/>
</dbReference>
<dbReference type="GO" id="GO:0006487">
    <property type="term" value="P:protein N-linked glycosylation"/>
    <property type="evidence" value="ECO:0000250"/>
    <property type="project" value="UniProtKB"/>
</dbReference>
<dbReference type="GO" id="GO:0006493">
    <property type="term" value="P:protein O-linked glycosylation"/>
    <property type="evidence" value="ECO:0000250"/>
    <property type="project" value="UniProtKB"/>
</dbReference>
<dbReference type="GO" id="GO:1903037">
    <property type="term" value="P:regulation of leukocyte cell-cell adhesion"/>
    <property type="evidence" value="ECO:0000250"/>
    <property type="project" value="UniProtKB"/>
</dbReference>
<dbReference type="GO" id="GO:1903236">
    <property type="term" value="P:regulation of leukocyte tethering or rolling"/>
    <property type="evidence" value="ECO:0000250"/>
    <property type="project" value="UniProtKB"/>
</dbReference>
<dbReference type="FunFam" id="3.40.50.11660:FF:000001">
    <property type="entry name" value="alpha-(1,3)-fucosyltransferase 9"/>
    <property type="match status" value="1"/>
</dbReference>
<dbReference type="Gene3D" id="3.40.50.11660">
    <property type="entry name" value="Glycosyl transferase family 10, C-terminal domain"/>
    <property type="match status" value="1"/>
</dbReference>
<dbReference type="InterPro" id="IPR055270">
    <property type="entry name" value="Glyco_tran_10_C"/>
</dbReference>
<dbReference type="InterPro" id="IPR031481">
    <property type="entry name" value="Glyco_tran_10_N"/>
</dbReference>
<dbReference type="InterPro" id="IPR001503">
    <property type="entry name" value="Glyco_trans_10"/>
</dbReference>
<dbReference type="InterPro" id="IPR038577">
    <property type="entry name" value="GT10-like_C_sf"/>
</dbReference>
<dbReference type="PANTHER" id="PTHR11929:SF10">
    <property type="entry name" value="4-GALACTOSYL-N-ACETYLGLUCOSAMINIDE 3-ALPHA-L-FUCOSYLTRANSFERASE 9"/>
    <property type="match status" value="1"/>
</dbReference>
<dbReference type="PANTHER" id="PTHR11929">
    <property type="entry name" value="ALPHA- 1,3 -FUCOSYLTRANSFERASE"/>
    <property type="match status" value="1"/>
</dbReference>
<dbReference type="Pfam" id="PF17039">
    <property type="entry name" value="Glyco_tran_10_N"/>
    <property type="match status" value="1"/>
</dbReference>
<dbReference type="Pfam" id="PF00852">
    <property type="entry name" value="Glyco_transf_10"/>
    <property type="match status" value="1"/>
</dbReference>
<dbReference type="SUPFAM" id="SSF53756">
    <property type="entry name" value="UDP-Glycosyltransferase/glycogen phosphorylase"/>
    <property type="match status" value="1"/>
</dbReference>
<accession>Q659L0</accession>
<feature type="chain" id="PRO_0000221120" description="4-galactosyl-N-acetylglucosaminide 3-alpha-L-fucosyltransferase 9">
    <location>
        <begin position="1"/>
        <end position="359"/>
    </location>
</feature>
<feature type="topological domain" description="Cytoplasmic" evidence="4">
    <location>
        <begin position="1"/>
        <end position="11"/>
    </location>
</feature>
<feature type="transmembrane region" description="Helical; Signal-anchor for type II membrane protein" evidence="4">
    <location>
        <begin position="12"/>
        <end position="32"/>
    </location>
</feature>
<feature type="topological domain" description="Lumenal" evidence="4">
    <location>
        <begin position="33"/>
        <end position="359"/>
    </location>
</feature>
<feature type="region of interest" description="Acceptor-binding" evidence="3">
    <location>
        <begin position="63"/>
        <end position="168"/>
    </location>
</feature>
<feature type="region of interest" description="Donor-binding" evidence="3">
    <location>
        <begin position="169"/>
        <end position="326"/>
    </location>
</feature>
<feature type="region of interest" description="Acceptor-binding" evidence="3">
    <location>
        <begin position="327"/>
        <end position="359"/>
    </location>
</feature>
<feature type="active site" description="Nucleophile" evidence="3">
    <location>
        <position position="137"/>
    </location>
</feature>
<feature type="binding site" evidence="3">
    <location>
        <position position="75"/>
    </location>
    <ligand>
        <name>a beta-D-galactosyl-(1-&gt;4)-N-acetyl-beta-D-glucosaminyl derivative</name>
        <dbReference type="ChEBI" id="CHEBI:133507"/>
    </ligand>
</feature>
<feature type="binding site" evidence="3">
    <location>
        <position position="137"/>
    </location>
    <ligand>
        <name>a beta-D-galactosyl-(1-&gt;4)-N-acetyl-beta-D-glucosaminyl derivative</name>
        <dbReference type="ChEBI" id="CHEBI:133507"/>
    </ligand>
</feature>
<feature type="binding site" evidence="3">
    <location>
        <position position="137"/>
    </location>
    <ligand>
        <name>GDP-beta-L-fucose</name>
        <dbReference type="ChEBI" id="CHEBI:57273"/>
    </ligand>
</feature>
<feature type="binding site" evidence="3">
    <location>
        <position position="168"/>
    </location>
    <ligand>
        <name>GDP-beta-L-fucose</name>
        <dbReference type="ChEBI" id="CHEBI:57273"/>
    </ligand>
</feature>
<feature type="binding site" evidence="3">
    <location>
        <position position="192"/>
    </location>
    <ligand>
        <name>GDP-beta-L-fucose</name>
        <dbReference type="ChEBI" id="CHEBI:57273"/>
    </ligand>
</feature>
<feature type="binding site" evidence="3">
    <location>
        <position position="194"/>
    </location>
    <ligand>
        <name>GDP-beta-L-fucose</name>
        <dbReference type="ChEBI" id="CHEBI:57273"/>
    </ligand>
</feature>
<feature type="binding site" evidence="3">
    <location>
        <position position="195"/>
    </location>
    <ligand>
        <name>GDP-beta-L-fucose</name>
        <dbReference type="ChEBI" id="CHEBI:57273"/>
    </ligand>
</feature>
<feature type="binding site" evidence="3">
    <location>
        <position position="202"/>
    </location>
    <ligand>
        <name>GDP-beta-L-fucose</name>
        <dbReference type="ChEBI" id="CHEBI:57273"/>
    </ligand>
</feature>
<feature type="binding site" evidence="3">
    <location>
        <position position="226"/>
    </location>
    <ligand>
        <name>GDP-beta-L-fucose</name>
        <dbReference type="ChEBI" id="CHEBI:57273"/>
    </ligand>
</feature>
<feature type="binding site" evidence="3">
    <location>
        <position position="241"/>
    </location>
    <ligand>
        <name>GDP-beta-L-fucose</name>
        <dbReference type="ChEBI" id="CHEBI:57273"/>
    </ligand>
</feature>
<feature type="binding site" evidence="3">
    <location>
        <position position="246"/>
    </location>
    <ligand>
        <name>GDP-beta-L-fucose</name>
        <dbReference type="ChEBI" id="CHEBI:57273"/>
    </ligand>
</feature>
<feature type="binding site" evidence="3">
    <location>
        <position position="252"/>
    </location>
    <ligand>
        <name>GDP-beta-L-fucose</name>
        <dbReference type="ChEBI" id="CHEBI:57273"/>
    </ligand>
</feature>
<feature type="binding site" evidence="3">
    <location>
        <position position="255"/>
    </location>
    <ligand>
        <name>GDP-beta-L-fucose</name>
        <dbReference type="ChEBI" id="CHEBI:57273"/>
    </ligand>
</feature>
<feature type="binding site" evidence="3">
    <location>
        <position position="256"/>
    </location>
    <ligand>
        <name>GDP-beta-L-fucose</name>
        <dbReference type="ChEBI" id="CHEBI:57273"/>
    </ligand>
</feature>
<feature type="glycosylation site" description="N-linked (GlcNAc...) asparagine" evidence="4">
    <location>
        <position position="62"/>
    </location>
</feature>
<feature type="glycosylation site" description="N-linked (GlcNAc...) asparagine" evidence="4">
    <location>
        <position position="101"/>
    </location>
</feature>
<feature type="glycosylation site" description="N-linked (GlcNAc...) asparagine" evidence="3 4">
    <location>
        <position position="153"/>
    </location>
</feature>
<feature type="disulfide bond" evidence="3">
    <location>
        <begin position="82"/>
        <end position="335"/>
    </location>
</feature>
<feature type="disulfide bond" evidence="3">
    <location>
        <begin position="91"/>
        <end position="338"/>
    </location>
</feature>
<feature type="disulfide bond" evidence="3">
    <location>
        <begin position="190"/>
        <end position="238"/>
    </location>
</feature>
<sequence length="359" mass="42071">MTSTSKGILRPFLIVCIILGCFMACLLIYIKPTNSWIFSPMESASSVLKMKNFFSTKTDYFNETTILVWVWPFGQTFDLTSCQAMFNIQGCHLTTDRSLYNKSHAVLIHHRDISWDLTNLPQQARPPFQKWIWMNLESPTHTPQKSGIEHLFNLTLTYRRDSDIQVPYGFLTVSTNPFVFEVPSKEKLVCWVVSNWNPEHARVKYYNELSKSIEIHTYGQAFGEYVNDKNLIPTISTCKFYLSFENSIHKDYITEKLYNAFLAGSVPVVLGPSRENYENYIPADSFIHVEDYNSPSELAKYLKEVDKNNKLYLSYFNWRKDFTVNLPRFWESHACLACDHVKRHQEYKSVGNLEKWFWN</sequence>
<proteinExistence type="evidence at transcript level"/>